<feature type="chain" id="PRO_0000129708" description="Large ribosomal subunit protein uL2cz/uL2cy">
    <location>
        <begin position="1"/>
        <end position="274"/>
    </location>
</feature>
<feature type="region of interest" description="Disordered" evidence="3">
    <location>
        <begin position="1"/>
        <end position="24"/>
    </location>
</feature>
<feature type="region of interest" description="Disordered" evidence="3">
    <location>
        <begin position="223"/>
        <end position="274"/>
    </location>
</feature>
<feature type="compositionally biased region" description="Polar residues" evidence="3">
    <location>
        <begin position="7"/>
        <end position="24"/>
    </location>
</feature>
<keyword id="KW-0150">Chloroplast</keyword>
<keyword id="KW-0934">Plastid</keyword>
<keyword id="KW-1185">Reference proteome</keyword>
<keyword id="KW-0687">Ribonucleoprotein</keyword>
<keyword id="KW-0689">Ribosomal protein</keyword>
<comment type="subunit">
    <text evidence="1">Part of the 50S ribosomal subunit.</text>
</comment>
<comment type="subcellular location">
    <subcellularLocation>
        <location>Plastid</location>
        <location>Chloroplast</location>
    </subcellularLocation>
</comment>
<comment type="similarity">
    <text evidence="4">Belongs to the universal ribosomal protein uL2 family.</text>
</comment>
<name>RK2_TOBAC</name>
<sequence>MAIHLYKTSTPSTRNGTVDSQVKSNPRNNLIYGQHHCGKGRNARGIITARHRGGGHKRLYRKIDFRRNEKDIYGRIVTIEYDPNRNAYICLIHYGDGEKRYILHPRGAIIGDTIVSGTEVPIKMGNALPLTDMPLGTAIHNIEITLGKGGQLARAAGAVAKLIAKEGKSATLKLPSGEVRLISKNCSATVGQVGNVGVNQKSLGRAGSKRWLGKRPVVRGVVMNPVDHPHGGGEGRAPIGRKKPTTPWGYPALGRRSRKRNKYSDNLILRRRSK</sequence>
<evidence type="ECO:0000250" key="1"/>
<evidence type="ECO:0000255" key="2">
    <source>
        <dbReference type="HAMAP-Rule" id="MF_01320"/>
    </source>
</evidence>
<evidence type="ECO:0000256" key="3">
    <source>
        <dbReference type="SAM" id="MobiDB-lite"/>
    </source>
</evidence>
<evidence type="ECO:0000305" key="4"/>
<protein>
    <recommendedName>
        <fullName evidence="2">Large ribosomal subunit protein uL2cz/uL2cy</fullName>
    </recommendedName>
    <alternativeName>
        <fullName evidence="4">50S ribosomal protein L2, chloroplastic</fullName>
    </alternativeName>
</protein>
<geneLocation type="chloroplast"/>
<gene>
    <name type="primary">rpl2-A</name>
</gene>
<gene>
    <name type="primary">rpl2-B</name>
</gene>
<reference key="1">
    <citation type="journal article" date="1986" name="Proc. Natl. Acad. Sci. U.S.A.">
        <title>Genes for the eight ribosomal proteins are clustered on the chloroplast genome of tobacco (Nicotiana tabacum): similarity to the S10 and spc operons of Escherichia coli.</title>
        <authorList>
            <person name="Tanaka M."/>
            <person name="Wakasugi T."/>
            <person name="Sugita M."/>
            <person name="Shinozaki K."/>
            <person name="Sugiura M."/>
        </authorList>
    </citation>
    <scope>NUCLEOTIDE SEQUENCE [GENOMIC DNA]</scope>
</reference>
<reference key="2">
    <citation type="journal article" date="1986" name="EMBO J.">
        <title>The complete nucleotide sequence of the tobacco chloroplast genome: its gene organization and expression.</title>
        <authorList>
            <person name="Shinozaki K."/>
            <person name="Ohme M."/>
            <person name="Tanaka M."/>
            <person name="Wakasugi T."/>
            <person name="Hayashida N."/>
            <person name="Matsubayashi T."/>
            <person name="Zaita N."/>
            <person name="Chunwongse J."/>
            <person name="Obokata J."/>
            <person name="Yamaguchi-Shinozaki K."/>
            <person name="Ohto C."/>
            <person name="Torazawa K."/>
            <person name="Meng B.-Y."/>
            <person name="Sugita M."/>
            <person name="Deno H."/>
            <person name="Kamogashira T."/>
            <person name="Yamada K."/>
            <person name="Kusuda J."/>
            <person name="Takaiwa F."/>
            <person name="Kato A."/>
            <person name="Tohdoh N."/>
            <person name="Shimada H."/>
            <person name="Sugiura M."/>
        </authorList>
    </citation>
    <scope>NUCLEOTIDE SEQUENCE [LARGE SCALE GENOMIC DNA]</scope>
    <source>
        <strain>cv. Bright Yellow 4</strain>
    </source>
</reference>
<dbReference type="EMBL" id="Z00044">
    <property type="protein sequence ID" value="CAA77409.1"/>
    <property type="molecule type" value="Genomic_DNA"/>
</dbReference>
<dbReference type="EMBL" id="Z00044">
    <property type="protein sequence ID" value="CAA77384.1"/>
    <property type="molecule type" value="Genomic_DNA"/>
</dbReference>
<dbReference type="PIR" id="A02761">
    <property type="entry name" value="R5NT2"/>
</dbReference>
<dbReference type="SMR" id="P06379"/>
<dbReference type="KEGG" id="nta:800420"/>
<dbReference type="KEGG" id="nta:800468"/>
<dbReference type="OMA" id="NQCWATI"/>
<dbReference type="OrthoDB" id="1868197at2759"/>
<dbReference type="Proteomes" id="UP000084051">
    <property type="component" value="Unplaced"/>
</dbReference>
<dbReference type="GO" id="GO:0009507">
    <property type="term" value="C:chloroplast"/>
    <property type="evidence" value="ECO:0007669"/>
    <property type="project" value="UniProtKB-SubCell"/>
</dbReference>
<dbReference type="GO" id="GO:0015934">
    <property type="term" value="C:large ribosomal subunit"/>
    <property type="evidence" value="ECO:0007669"/>
    <property type="project" value="InterPro"/>
</dbReference>
<dbReference type="GO" id="GO:0019843">
    <property type="term" value="F:rRNA binding"/>
    <property type="evidence" value="ECO:0007669"/>
    <property type="project" value="UniProtKB-UniRule"/>
</dbReference>
<dbReference type="GO" id="GO:0003735">
    <property type="term" value="F:structural constituent of ribosome"/>
    <property type="evidence" value="ECO:0007669"/>
    <property type="project" value="InterPro"/>
</dbReference>
<dbReference type="GO" id="GO:0016740">
    <property type="term" value="F:transferase activity"/>
    <property type="evidence" value="ECO:0007669"/>
    <property type="project" value="InterPro"/>
</dbReference>
<dbReference type="GO" id="GO:0006412">
    <property type="term" value="P:translation"/>
    <property type="evidence" value="ECO:0007669"/>
    <property type="project" value="UniProtKB-UniRule"/>
</dbReference>
<dbReference type="FunFam" id="4.10.950.10:FF:000001">
    <property type="entry name" value="50S ribosomal protein L2"/>
    <property type="match status" value="1"/>
</dbReference>
<dbReference type="FunFam" id="2.30.30.30:FF:000008">
    <property type="entry name" value="50S ribosomal protein L2, chloroplastic"/>
    <property type="match status" value="1"/>
</dbReference>
<dbReference type="FunFam" id="2.40.50.140:FF:000029">
    <property type="entry name" value="50S ribosomal protein L2, chloroplastic"/>
    <property type="match status" value="1"/>
</dbReference>
<dbReference type="Gene3D" id="2.30.30.30">
    <property type="match status" value="1"/>
</dbReference>
<dbReference type="Gene3D" id="2.40.50.140">
    <property type="entry name" value="Nucleic acid-binding proteins"/>
    <property type="match status" value="1"/>
</dbReference>
<dbReference type="Gene3D" id="4.10.950.10">
    <property type="entry name" value="Ribosomal protein L2, domain 3"/>
    <property type="match status" value="1"/>
</dbReference>
<dbReference type="HAMAP" id="MF_01320_B">
    <property type="entry name" value="Ribosomal_uL2_B"/>
    <property type="match status" value="1"/>
</dbReference>
<dbReference type="InterPro" id="IPR012340">
    <property type="entry name" value="NA-bd_OB-fold"/>
</dbReference>
<dbReference type="InterPro" id="IPR014722">
    <property type="entry name" value="Rib_uL2_dom2"/>
</dbReference>
<dbReference type="InterPro" id="IPR002171">
    <property type="entry name" value="Ribosomal_uL2"/>
</dbReference>
<dbReference type="InterPro" id="IPR005880">
    <property type="entry name" value="Ribosomal_uL2_bac/org-type"/>
</dbReference>
<dbReference type="InterPro" id="IPR022669">
    <property type="entry name" value="Ribosomal_uL2_C"/>
</dbReference>
<dbReference type="InterPro" id="IPR022671">
    <property type="entry name" value="Ribosomal_uL2_CS"/>
</dbReference>
<dbReference type="InterPro" id="IPR014726">
    <property type="entry name" value="Ribosomal_uL2_dom3"/>
</dbReference>
<dbReference type="InterPro" id="IPR022666">
    <property type="entry name" value="Ribosomal_uL2_RNA-bd_dom"/>
</dbReference>
<dbReference type="InterPro" id="IPR008991">
    <property type="entry name" value="Translation_prot_SH3-like_sf"/>
</dbReference>
<dbReference type="NCBIfam" id="TIGR01171">
    <property type="entry name" value="rplB_bact"/>
    <property type="match status" value="1"/>
</dbReference>
<dbReference type="PANTHER" id="PTHR13691:SF5">
    <property type="entry name" value="LARGE RIBOSOMAL SUBUNIT PROTEIN UL2M"/>
    <property type="match status" value="1"/>
</dbReference>
<dbReference type="PANTHER" id="PTHR13691">
    <property type="entry name" value="RIBOSOMAL PROTEIN L2"/>
    <property type="match status" value="1"/>
</dbReference>
<dbReference type="Pfam" id="PF00181">
    <property type="entry name" value="Ribosomal_L2"/>
    <property type="match status" value="1"/>
</dbReference>
<dbReference type="Pfam" id="PF03947">
    <property type="entry name" value="Ribosomal_L2_C"/>
    <property type="match status" value="1"/>
</dbReference>
<dbReference type="PIRSF" id="PIRSF002158">
    <property type="entry name" value="Ribosomal_L2"/>
    <property type="match status" value="1"/>
</dbReference>
<dbReference type="SMART" id="SM01383">
    <property type="entry name" value="Ribosomal_L2"/>
    <property type="match status" value="1"/>
</dbReference>
<dbReference type="SMART" id="SM01382">
    <property type="entry name" value="Ribosomal_L2_C"/>
    <property type="match status" value="1"/>
</dbReference>
<dbReference type="SUPFAM" id="SSF50249">
    <property type="entry name" value="Nucleic acid-binding proteins"/>
    <property type="match status" value="1"/>
</dbReference>
<dbReference type="SUPFAM" id="SSF50104">
    <property type="entry name" value="Translation proteins SH3-like domain"/>
    <property type="match status" value="1"/>
</dbReference>
<dbReference type="PROSITE" id="PS00467">
    <property type="entry name" value="RIBOSOMAL_L2"/>
    <property type="match status" value="1"/>
</dbReference>
<organism>
    <name type="scientific">Nicotiana tabacum</name>
    <name type="common">Common tobacco</name>
    <dbReference type="NCBI Taxonomy" id="4097"/>
    <lineage>
        <taxon>Eukaryota</taxon>
        <taxon>Viridiplantae</taxon>
        <taxon>Streptophyta</taxon>
        <taxon>Embryophyta</taxon>
        <taxon>Tracheophyta</taxon>
        <taxon>Spermatophyta</taxon>
        <taxon>Magnoliopsida</taxon>
        <taxon>eudicotyledons</taxon>
        <taxon>Gunneridae</taxon>
        <taxon>Pentapetalae</taxon>
        <taxon>asterids</taxon>
        <taxon>lamiids</taxon>
        <taxon>Solanales</taxon>
        <taxon>Solanaceae</taxon>
        <taxon>Nicotianoideae</taxon>
        <taxon>Nicotianeae</taxon>
        <taxon>Nicotiana</taxon>
    </lineage>
</organism>
<proteinExistence type="inferred from homology"/>
<accession>P06379</accession>